<keyword id="KW-0963">Cytoplasm</keyword>
<keyword id="KW-0479">Metal-binding</keyword>
<keyword id="KW-0597">Phosphoprotein</keyword>
<keyword id="KW-0648">Protein biosynthesis</keyword>
<keyword id="KW-1185">Reference proteome</keyword>
<keyword id="KW-0862">Zinc</keyword>
<protein>
    <recommendedName>
        <fullName>Alanyl-tRNA editing protein Aarsd1</fullName>
    </recommendedName>
    <alternativeName>
        <fullName>Alanyl-tRNA synthetase domain-containing protein 1</fullName>
    </alternativeName>
</protein>
<sequence>MAFRCQRDSYAREFTTTVVSCRPAELHTEESNGKKEVLSGFQVVLEDTLLFPEGGGQPDDRGTINDISVLRVTRRGTQADHFTQTPLTPGTEVQVRVDWERRFDHMQQHSGQHLITAVADDLFGLKTTSWELGRLRSVIELDSPTVTAEQVAAIERSVNEKIRDRLPVNVRELSLDDPEVEQVRGRGLPDDHAGPIRVVTIESVDSNMCCGTHVSNLSDLQVIKILGTEKGKKNKTNLIFLAGNRVLKWMERSHGIEKALTALLKCGAEDHVEAVKKLQNSSKLLQKNNLNLLRDLAVHIAHSLRNSPDWGGVITLHRKGGGEASWRSWAACNFPAPFAAWSQVCALCFRKDGDSEFMNIIANEIGSEETLLFLTVGDEKGAGLFLLAGPAEAVETLGPRVSEVLEGKGAGKKGRFQGKATKMSRRAEVQALLQDYISTQSAEE</sequence>
<accession>Q32LK1</accession>
<proteinExistence type="evidence at transcript level"/>
<dbReference type="EMBL" id="BC109537">
    <property type="protein sequence ID" value="AAI09538.1"/>
    <property type="molecule type" value="mRNA"/>
</dbReference>
<dbReference type="RefSeq" id="NP_001033162.1">
    <property type="nucleotide sequence ID" value="NM_001038073.1"/>
</dbReference>
<dbReference type="SMR" id="Q32LK1"/>
<dbReference type="FunCoup" id="Q32LK1">
    <property type="interactions" value="2257"/>
</dbReference>
<dbReference type="STRING" id="9913.ENSBTAP00000030466"/>
<dbReference type="PaxDb" id="9913-ENSBTAP00000053479"/>
<dbReference type="GeneID" id="510711"/>
<dbReference type="KEGG" id="bta:100125882"/>
<dbReference type="CTD" id="100885848"/>
<dbReference type="eggNOG" id="KOG2105">
    <property type="taxonomic scope" value="Eukaryota"/>
</dbReference>
<dbReference type="eggNOG" id="KOG3158">
    <property type="taxonomic scope" value="Eukaryota"/>
</dbReference>
<dbReference type="InParanoid" id="Q32LK1"/>
<dbReference type="OrthoDB" id="288942at2759"/>
<dbReference type="Proteomes" id="UP000009136">
    <property type="component" value="Unplaced"/>
</dbReference>
<dbReference type="GO" id="GO:0005737">
    <property type="term" value="C:cytoplasm"/>
    <property type="evidence" value="ECO:0007669"/>
    <property type="project" value="UniProtKB-SubCell"/>
</dbReference>
<dbReference type="GO" id="GO:0004813">
    <property type="term" value="F:alanine-tRNA ligase activity"/>
    <property type="evidence" value="ECO:0007669"/>
    <property type="project" value="InterPro"/>
</dbReference>
<dbReference type="GO" id="GO:0005524">
    <property type="term" value="F:ATP binding"/>
    <property type="evidence" value="ECO:0007669"/>
    <property type="project" value="InterPro"/>
</dbReference>
<dbReference type="GO" id="GO:0046872">
    <property type="term" value="F:metal ion binding"/>
    <property type="evidence" value="ECO:0007669"/>
    <property type="project" value="UniProtKB-KW"/>
</dbReference>
<dbReference type="GO" id="GO:0003676">
    <property type="term" value="F:nucleic acid binding"/>
    <property type="evidence" value="ECO:0007669"/>
    <property type="project" value="InterPro"/>
</dbReference>
<dbReference type="GO" id="GO:0002196">
    <property type="term" value="F:Ser-tRNA(Ala) deacylase activity"/>
    <property type="evidence" value="ECO:0000318"/>
    <property type="project" value="GO_Central"/>
</dbReference>
<dbReference type="GO" id="GO:0006419">
    <property type="term" value="P:alanyl-tRNA aminoacylation"/>
    <property type="evidence" value="ECO:0007669"/>
    <property type="project" value="InterPro"/>
</dbReference>
<dbReference type="GO" id="GO:0006450">
    <property type="term" value="P:regulation of translational fidelity"/>
    <property type="evidence" value="ECO:0000318"/>
    <property type="project" value="GO_Central"/>
</dbReference>
<dbReference type="FunFam" id="3.30.980.10:FF:000007">
    <property type="entry name" value="alanyl-tRNA editing protein Aarsd1"/>
    <property type="match status" value="1"/>
</dbReference>
<dbReference type="FunFam" id="2.40.30.130:FF:000012">
    <property type="entry name" value="Predicted gene, 27029"/>
    <property type="match status" value="1"/>
</dbReference>
<dbReference type="Gene3D" id="2.40.30.130">
    <property type="match status" value="1"/>
</dbReference>
<dbReference type="Gene3D" id="3.30.980.10">
    <property type="entry name" value="Threonyl-trna Synthetase, Chain A, domain 2"/>
    <property type="match status" value="1"/>
</dbReference>
<dbReference type="InterPro" id="IPR018165">
    <property type="entry name" value="Ala-tRNA-synth_IIc_core"/>
</dbReference>
<dbReference type="InterPro" id="IPR051335">
    <property type="entry name" value="Alanyl-tRNA_Editing_Enzymes"/>
</dbReference>
<dbReference type="InterPro" id="IPR018163">
    <property type="entry name" value="Thr/Ala-tRNA-synth_IIc_edit"/>
</dbReference>
<dbReference type="InterPro" id="IPR009000">
    <property type="entry name" value="Transl_B-barrel_sf"/>
</dbReference>
<dbReference type="InterPro" id="IPR012947">
    <property type="entry name" value="tRNA_SAD"/>
</dbReference>
<dbReference type="PANTHER" id="PTHR43462">
    <property type="entry name" value="ALANYL-TRNA EDITING PROTEIN"/>
    <property type="match status" value="1"/>
</dbReference>
<dbReference type="PANTHER" id="PTHR43462:SF1">
    <property type="entry name" value="ALANYL-TRNA EDITING PROTEIN AARSD1"/>
    <property type="match status" value="1"/>
</dbReference>
<dbReference type="Pfam" id="PF07973">
    <property type="entry name" value="tRNA_SAD"/>
    <property type="match status" value="1"/>
</dbReference>
<dbReference type="SMART" id="SM00863">
    <property type="entry name" value="tRNA_SAD"/>
    <property type="match status" value="1"/>
</dbReference>
<dbReference type="SUPFAM" id="SSF55186">
    <property type="entry name" value="ThrRS/AlaRS common domain"/>
    <property type="match status" value="1"/>
</dbReference>
<dbReference type="SUPFAM" id="SSF50447">
    <property type="entry name" value="Translation proteins"/>
    <property type="match status" value="1"/>
</dbReference>
<dbReference type="PROSITE" id="PS50860">
    <property type="entry name" value="AA_TRNA_LIGASE_II_ALA"/>
    <property type="match status" value="1"/>
</dbReference>
<organism>
    <name type="scientific">Bos taurus</name>
    <name type="common">Bovine</name>
    <dbReference type="NCBI Taxonomy" id="9913"/>
    <lineage>
        <taxon>Eukaryota</taxon>
        <taxon>Metazoa</taxon>
        <taxon>Chordata</taxon>
        <taxon>Craniata</taxon>
        <taxon>Vertebrata</taxon>
        <taxon>Euteleostomi</taxon>
        <taxon>Mammalia</taxon>
        <taxon>Eutheria</taxon>
        <taxon>Laurasiatheria</taxon>
        <taxon>Artiodactyla</taxon>
        <taxon>Ruminantia</taxon>
        <taxon>Pecora</taxon>
        <taxon>Bovidae</taxon>
        <taxon>Bovinae</taxon>
        <taxon>Bos</taxon>
    </lineage>
</organism>
<name>AASD1_BOVIN</name>
<comment type="function">
    <text evidence="1">Functions in trans to edit the amino acid moiety from incorrectly charged tRNA(Ala).</text>
</comment>
<comment type="cofactor">
    <cofactor evidence="4">
        <name>Zn(2+)</name>
        <dbReference type="ChEBI" id="CHEBI:29105"/>
    </cofactor>
    <text evidence="4">Binds 1 zinc ion per subunit.</text>
</comment>
<comment type="subcellular location">
    <subcellularLocation>
        <location evidence="1">Cytoplasm</location>
    </subcellularLocation>
</comment>
<comment type="similarity">
    <text evidence="4">Belongs to the class-II aminoacyl-tRNA synthetase family. Alax-L subfamily.</text>
</comment>
<gene>
    <name type="primary">AARSD1</name>
</gene>
<reference key="1">
    <citation type="submission" date="2005-11" db="EMBL/GenBank/DDBJ databases">
        <authorList>
            <consortium name="NIH - Mammalian Gene Collection (MGC) project"/>
        </authorList>
    </citation>
    <scope>NUCLEOTIDE SEQUENCE [LARGE SCALE MRNA]</scope>
    <source>
        <strain>Crossbred X Angus</strain>
        <tissue>Liver</tissue>
    </source>
</reference>
<feature type="chain" id="PRO_0000277464" description="Alanyl-tRNA editing protein Aarsd1">
    <location>
        <begin position="1"/>
        <end position="444"/>
    </location>
</feature>
<feature type="binding site" evidence="3">
    <location>
        <position position="109"/>
    </location>
    <ligand>
        <name>Zn(2+)</name>
        <dbReference type="ChEBI" id="CHEBI:29105"/>
    </ligand>
</feature>
<feature type="binding site" evidence="3">
    <location>
        <position position="113"/>
    </location>
    <ligand>
        <name>Zn(2+)</name>
        <dbReference type="ChEBI" id="CHEBI:29105"/>
    </ligand>
</feature>
<feature type="binding site" evidence="3">
    <location>
        <position position="209"/>
    </location>
    <ligand>
        <name>Zn(2+)</name>
        <dbReference type="ChEBI" id="CHEBI:29105"/>
    </ligand>
</feature>
<feature type="binding site" evidence="3">
    <location>
        <position position="213"/>
    </location>
    <ligand>
        <name>Zn(2+)</name>
        <dbReference type="ChEBI" id="CHEBI:29105"/>
    </ligand>
</feature>
<feature type="modified residue" description="Phosphoserine" evidence="2">
    <location>
        <position position="174"/>
    </location>
</feature>
<evidence type="ECO:0000250" key="1"/>
<evidence type="ECO:0000250" key="2">
    <source>
        <dbReference type="UniProtKB" id="Q9BTE6"/>
    </source>
</evidence>
<evidence type="ECO:0000255" key="3"/>
<evidence type="ECO:0000305" key="4"/>